<protein>
    <recommendedName>
        <fullName evidence="1">Protein FdhE</fullName>
    </recommendedName>
</protein>
<feature type="chain" id="PRO_1000130368" description="Protein FdhE">
    <location>
        <begin position="1"/>
        <end position="309"/>
    </location>
</feature>
<dbReference type="EMBL" id="AM933172">
    <property type="protein sequence ID" value="CAR35397.1"/>
    <property type="molecule type" value="Genomic_DNA"/>
</dbReference>
<dbReference type="RefSeq" id="WP_000027736.1">
    <property type="nucleotide sequence ID" value="NC_011294.1"/>
</dbReference>
<dbReference type="SMR" id="B5QWW9"/>
<dbReference type="KEGG" id="set:SEN3823"/>
<dbReference type="HOGENOM" id="CLU_055275_0_0_6"/>
<dbReference type="Proteomes" id="UP000000613">
    <property type="component" value="Chromosome"/>
</dbReference>
<dbReference type="GO" id="GO:0005829">
    <property type="term" value="C:cytosol"/>
    <property type="evidence" value="ECO:0007669"/>
    <property type="project" value="TreeGrafter"/>
</dbReference>
<dbReference type="GO" id="GO:0008199">
    <property type="term" value="F:ferric iron binding"/>
    <property type="evidence" value="ECO:0007669"/>
    <property type="project" value="TreeGrafter"/>
</dbReference>
<dbReference type="GO" id="GO:0051604">
    <property type="term" value="P:protein maturation"/>
    <property type="evidence" value="ECO:0007669"/>
    <property type="project" value="TreeGrafter"/>
</dbReference>
<dbReference type="CDD" id="cd16341">
    <property type="entry name" value="FdhE"/>
    <property type="match status" value="1"/>
</dbReference>
<dbReference type="FunFam" id="3.90.1670.10:FF:000001">
    <property type="entry name" value="Protein FdhE"/>
    <property type="match status" value="1"/>
</dbReference>
<dbReference type="Gene3D" id="3.90.1670.10">
    <property type="entry name" value="FdhE-like domain"/>
    <property type="match status" value="1"/>
</dbReference>
<dbReference type="HAMAP" id="MF_00611">
    <property type="entry name" value="FdeH"/>
    <property type="match status" value="1"/>
</dbReference>
<dbReference type="InterPro" id="IPR024064">
    <property type="entry name" value="FdhE-like_sf"/>
</dbReference>
<dbReference type="InterPro" id="IPR056796">
    <property type="entry name" value="FdhE_C"/>
</dbReference>
<dbReference type="InterPro" id="IPR056797">
    <property type="entry name" value="FdhE_central"/>
</dbReference>
<dbReference type="InterPro" id="IPR056774">
    <property type="entry name" value="FdhE_N"/>
</dbReference>
<dbReference type="InterPro" id="IPR006452">
    <property type="entry name" value="Formate_DH_accessory"/>
</dbReference>
<dbReference type="NCBIfam" id="TIGR01562">
    <property type="entry name" value="FdhE"/>
    <property type="match status" value="1"/>
</dbReference>
<dbReference type="NCBIfam" id="NF002925">
    <property type="entry name" value="PRK03564.1"/>
    <property type="match status" value="1"/>
</dbReference>
<dbReference type="PANTHER" id="PTHR37689">
    <property type="entry name" value="PROTEIN FDHE"/>
    <property type="match status" value="1"/>
</dbReference>
<dbReference type="PANTHER" id="PTHR37689:SF1">
    <property type="entry name" value="PROTEIN FDHE"/>
    <property type="match status" value="1"/>
</dbReference>
<dbReference type="Pfam" id="PF24860">
    <property type="entry name" value="FdhE_C"/>
    <property type="match status" value="1"/>
</dbReference>
<dbReference type="Pfam" id="PF24859">
    <property type="entry name" value="FdhE_central"/>
    <property type="match status" value="1"/>
</dbReference>
<dbReference type="Pfam" id="PF04216">
    <property type="entry name" value="FdhE_N"/>
    <property type="match status" value="1"/>
</dbReference>
<dbReference type="PIRSF" id="PIRSF018296">
    <property type="entry name" value="Format_dh_formtn"/>
    <property type="match status" value="1"/>
</dbReference>
<dbReference type="SUPFAM" id="SSF144020">
    <property type="entry name" value="FdhE-like"/>
    <property type="match status" value="1"/>
</dbReference>
<organism>
    <name type="scientific">Salmonella enteritidis PT4 (strain P125109)</name>
    <dbReference type="NCBI Taxonomy" id="550537"/>
    <lineage>
        <taxon>Bacteria</taxon>
        <taxon>Pseudomonadati</taxon>
        <taxon>Pseudomonadota</taxon>
        <taxon>Gammaproteobacteria</taxon>
        <taxon>Enterobacterales</taxon>
        <taxon>Enterobacteriaceae</taxon>
        <taxon>Salmonella</taxon>
    </lineage>
</organism>
<keyword id="KW-0963">Cytoplasm</keyword>
<comment type="function">
    <text evidence="1">Necessary for formate dehydrogenase activity.</text>
</comment>
<comment type="subcellular location">
    <subcellularLocation>
        <location evidence="1">Cytoplasm</location>
    </subcellularLocation>
</comment>
<comment type="similarity">
    <text evidence="1">Belongs to the FdhE family.</text>
</comment>
<gene>
    <name evidence="1" type="primary">fdhE</name>
    <name type="ordered locus">SEN3823</name>
</gene>
<reference key="1">
    <citation type="journal article" date="2008" name="Genome Res.">
        <title>Comparative genome analysis of Salmonella enteritidis PT4 and Salmonella gallinarum 287/91 provides insights into evolutionary and host adaptation pathways.</title>
        <authorList>
            <person name="Thomson N.R."/>
            <person name="Clayton D.J."/>
            <person name="Windhorst D."/>
            <person name="Vernikos G."/>
            <person name="Davidson S."/>
            <person name="Churcher C."/>
            <person name="Quail M.A."/>
            <person name="Stevens M."/>
            <person name="Jones M.A."/>
            <person name="Watson M."/>
            <person name="Barron A."/>
            <person name="Layton A."/>
            <person name="Pickard D."/>
            <person name="Kingsley R.A."/>
            <person name="Bignell A."/>
            <person name="Clark L."/>
            <person name="Harris B."/>
            <person name="Ormond D."/>
            <person name="Abdellah Z."/>
            <person name="Brooks K."/>
            <person name="Cherevach I."/>
            <person name="Chillingworth T."/>
            <person name="Woodward J."/>
            <person name="Norberczak H."/>
            <person name="Lord A."/>
            <person name="Arrowsmith C."/>
            <person name="Jagels K."/>
            <person name="Moule S."/>
            <person name="Mungall K."/>
            <person name="Saunders M."/>
            <person name="Whitehead S."/>
            <person name="Chabalgoity J.A."/>
            <person name="Maskell D."/>
            <person name="Humphreys T."/>
            <person name="Roberts M."/>
            <person name="Barrow P.A."/>
            <person name="Dougan G."/>
            <person name="Parkhill J."/>
        </authorList>
    </citation>
    <scope>NUCLEOTIDE SEQUENCE [LARGE SCALE GENOMIC DNA]</scope>
    <source>
        <strain>P125109</strain>
    </source>
</reference>
<proteinExistence type="inferred from homology"/>
<evidence type="ECO:0000255" key="1">
    <source>
        <dbReference type="HAMAP-Rule" id="MF_00611"/>
    </source>
</evidence>
<sequence length="309" mass="34719">MSIRIIPQDELGSSEKRTADMIPPLLFPRLKNVYNRRAERLRELAENNPLGDYLRFAALIAHAQEVVLYDHPLRMDLTARIKDANDQGKPPLDIHVLPRDKHWHTLLHSMIAELKPEMSGPALAVIENLEKASEQELEQMASALFASDFASVSSDKAPFIWAALSLYWAQMASLIPGKARAEYGEARQYCPVCGSMPVSSMVQIGTTQGLRYLHCNLCETEWHVVRVKCSNCEQSRDLHYWSLENEQAAVKAESCGDCGTYLKILYQEKDPKVEAVADDLASLVLDARMEQEGFARSSINPFLFPGEGE</sequence>
<name>FDHE_SALEP</name>
<accession>B5QWW9</accession>